<gene>
    <name evidence="1" type="primary">dnaA</name>
    <name type="ordered locus">SUB0001</name>
</gene>
<feature type="chain" id="PRO_1000189815" description="Chromosomal replication initiator protein DnaA">
    <location>
        <begin position="1"/>
        <end position="451"/>
    </location>
</feature>
<feature type="region of interest" description="Domain I, interacts with DnaA modulators" evidence="1">
    <location>
        <begin position="1"/>
        <end position="101"/>
    </location>
</feature>
<feature type="region of interest" description="Domain II" evidence="1">
    <location>
        <begin position="101"/>
        <end position="110"/>
    </location>
</feature>
<feature type="region of interest" description="Domain III, AAA+ region" evidence="1">
    <location>
        <begin position="111"/>
        <end position="329"/>
    </location>
</feature>
<feature type="region of interest" description="Domain IV, binds dsDNA" evidence="1">
    <location>
        <begin position="330"/>
        <end position="451"/>
    </location>
</feature>
<feature type="binding site" evidence="1">
    <location>
        <position position="155"/>
    </location>
    <ligand>
        <name>ATP</name>
        <dbReference type="ChEBI" id="CHEBI:30616"/>
    </ligand>
</feature>
<feature type="binding site" evidence="1">
    <location>
        <position position="157"/>
    </location>
    <ligand>
        <name>ATP</name>
        <dbReference type="ChEBI" id="CHEBI:30616"/>
    </ligand>
</feature>
<feature type="binding site" evidence="1">
    <location>
        <position position="158"/>
    </location>
    <ligand>
        <name>ATP</name>
        <dbReference type="ChEBI" id="CHEBI:30616"/>
    </ligand>
</feature>
<feature type="binding site" evidence="1">
    <location>
        <position position="159"/>
    </location>
    <ligand>
        <name>ATP</name>
        <dbReference type="ChEBI" id="CHEBI:30616"/>
    </ligand>
</feature>
<organism>
    <name type="scientific">Streptococcus uberis (strain ATCC BAA-854 / 0140J)</name>
    <dbReference type="NCBI Taxonomy" id="218495"/>
    <lineage>
        <taxon>Bacteria</taxon>
        <taxon>Bacillati</taxon>
        <taxon>Bacillota</taxon>
        <taxon>Bacilli</taxon>
        <taxon>Lactobacillales</taxon>
        <taxon>Streptococcaceae</taxon>
        <taxon>Streptococcus</taxon>
    </lineage>
</organism>
<keyword id="KW-0067">ATP-binding</keyword>
<keyword id="KW-0963">Cytoplasm</keyword>
<keyword id="KW-0235">DNA replication</keyword>
<keyword id="KW-0238">DNA-binding</keyword>
<keyword id="KW-0446">Lipid-binding</keyword>
<keyword id="KW-0547">Nucleotide-binding</keyword>
<keyword id="KW-1185">Reference proteome</keyword>
<accession>B9DSN7</accession>
<dbReference type="EMBL" id="AM946015">
    <property type="protein sequence ID" value="CAR40315.1"/>
    <property type="molecule type" value="Genomic_DNA"/>
</dbReference>
<dbReference type="RefSeq" id="WP_012657571.1">
    <property type="nucleotide sequence ID" value="NC_012004.1"/>
</dbReference>
<dbReference type="SMR" id="B9DSN7"/>
<dbReference type="STRING" id="218495.SUB0001"/>
<dbReference type="GeneID" id="93825208"/>
<dbReference type="KEGG" id="sub:SUB0001"/>
<dbReference type="eggNOG" id="COG0593">
    <property type="taxonomic scope" value="Bacteria"/>
</dbReference>
<dbReference type="HOGENOM" id="CLU_026910_3_1_9"/>
<dbReference type="OrthoDB" id="9807019at2"/>
<dbReference type="Proteomes" id="UP000000449">
    <property type="component" value="Chromosome"/>
</dbReference>
<dbReference type="GO" id="GO:0005737">
    <property type="term" value="C:cytoplasm"/>
    <property type="evidence" value="ECO:0007669"/>
    <property type="project" value="UniProtKB-SubCell"/>
</dbReference>
<dbReference type="GO" id="GO:0005886">
    <property type="term" value="C:plasma membrane"/>
    <property type="evidence" value="ECO:0007669"/>
    <property type="project" value="TreeGrafter"/>
</dbReference>
<dbReference type="GO" id="GO:0005524">
    <property type="term" value="F:ATP binding"/>
    <property type="evidence" value="ECO:0007669"/>
    <property type="project" value="UniProtKB-UniRule"/>
</dbReference>
<dbReference type="GO" id="GO:0016887">
    <property type="term" value="F:ATP hydrolysis activity"/>
    <property type="evidence" value="ECO:0007669"/>
    <property type="project" value="InterPro"/>
</dbReference>
<dbReference type="GO" id="GO:0003688">
    <property type="term" value="F:DNA replication origin binding"/>
    <property type="evidence" value="ECO:0007669"/>
    <property type="project" value="UniProtKB-UniRule"/>
</dbReference>
<dbReference type="GO" id="GO:0008289">
    <property type="term" value="F:lipid binding"/>
    <property type="evidence" value="ECO:0007669"/>
    <property type="project" value="UniProtKB-KW"/>
</dbReference>
<dbReference type="GO" id="GO:0006270">
    <property type="term" value="P:DNA replication initiation"/>
    <property type="evidence" value="ECO:0007669"/>
    <property type="project" value="UniProtKB-UniRule"/>
</dbReference>
<dbReference type="GO" id="GO:0006275">
    <property type="term" value="P:regulation of DNA replication"/>
    <property type="evidence" value="ECO:0007669"/>
    <property type="project" value="UniProtKB-UniRule"/>
</dbReference>
<dbReference type="CDD" id="cd00009">
    <property type="entry name" value="AAA"/>
    <property type="match status" value="1"/>
</dbReference>
<dbReference type="CDD" id="cd06571">
    <property type="entry name" value="Bac_DnaA_C"/>
    <property type="match status" value="1"/>
</dbReference>
<dbReference type="FunFam" id="1.10.1750.10:FF:000002">
    <property type="entry name" value="Chromosomal replication initiator protein DnaA"/>
    <property type="match status" value="1"/>
</dbReference>
<dbReference type="FunFam" id="3.40.50.300:FF:000668">
    <property type="entry name" value="Chromosomal replication initiator protein DnaA"/>
    <property type="match status" value="1"/>
</dbReference>
<dbReference type="Gene3D" id="1.10.1750.10">
    <property type="match status" value="1"/>
</dbReference>
<dbReference type="Gene3D" id="1.10.8.60">
    <property type="match status" value="1"/>
</dbReference>
<dbReference type="Gene3D" id="3.40.50.300">
    <property type="entry name" value="P-loop containing nucleotide triphosphate hydrolases"/>
    <property type="match status" value="1"/>
</dbReference>
<dbReference type="HAMAP" id="MF_00377">
    <property type="entry name" value="DnaA_bact"/>
    <property type="match status" value="1"/>
</dbReference>
<dbReference type="InterPro" id="IPR003593">
    <property type="entry name" value="AAA+_ATPase"/>
</dbReference>
<dbReference type="InterPro" id="IPR001957">
    <property type="entry name" value="Chromosome_initiator_DnaA"/>
</dbReference>
<dbReference type="InterPro" id="IPR020591">
    <property type="entry name" value="Chromosome_initiator_DnaA-like"/>
</dbReference>
<dbReference type="InterPro" id="IPR018312">
    <property type="entry name" value="Chromosome_initiator_DnaA_CS"/>
</dbReference>
<dbReference type="InterPro" id="IPR013159">
    <property type="entry name" value="DnaA_C"/>
</dbReference>
<dbReference type="InterPro" id="IPR013317">
    <property type="entry name" value="DnaA_dom"/>
</dbReference>
<dbReference type="InterPro" id="IPR027417">
    <property type="entry name" value="P-loop_NTPase"/>
</dbReference>
<dbReference type="InterPro" id="IPR010921">
    <property type="entry name" value="Trp_repressor/repl_initiator"/>
</dbReference>
<dbReference type="NCBIfam" id="TIGR00362">
    <property type="entry name" value="DnaA"/>
    <property type="match status" value="1"/>
</dbReference>
<dbReference type="PANTHER" id="PTHR30050">
    <property type="entry name" value="CHROMOSOMAL REPLICATION INITIATOR PROTEIN DNAA"/>
    <property type="match status" value="1"/>
</dbReference>
<dbReference type="PANTHER" id="PTHR30050:SF2">
    <property type="entry name" value="CHROMOSOMAL REPLICATION INITIATOR PROTEIN DNAA"/>
    <property type="match status" value="1"/>
</dbReference>
<dbReference type="Pfam" id="PF00308">
    <property type="entry name" value="Bac_DnaA"/>
    <property type="match status" value="1"/>
</dbReference>
<dbReference type="Pfam" id="PF08299">
    <property type="entry name" value="Bac_DnaA_C"/>
    <property type="match status" value="1"/>
</dbReference>
<dbReference type="PRINTS" id="PR00051">
    <property type="entry name" value="DNAA"/>
</dbReference>
<dbReference type="SMART" id="SM00382">
    <property type="entry name" value="AAA"/>
    <property type="match status" value="1"/>
</dbReference>
<dbReference type="SMART" id="SM00760">
    <property type="entry name" value="Bac_DnaA_C"/>
    <property type="match status" value="1"/>
</dbReference>
<dbReference type="SUPFAM" id="SSF52540">
    <property type="entry name" value="P-loop containing nucleoside triphosphate hydrolases"/>
    <property type="match status" value="1"/>
</dbReference>
<dbReference type="SUPFAM" id="SSF48295">
    <property type="entry name" value="TrpR-like"/>
    <property type="match status" value="1"/>
</dbReference>
<dbReference type="PROSITE" id="PS01008">
    <property type="entry name" value="DNAA"/>
    <property type="match status" value="1"/>
</dbReference>
<comment type="function">
    <text evidence="1">Plays an essential role in the initiation and regulation of chromosomal replication. ATP-DnaA binds to the origin of replication (oriC) to initiate formation of the DNA replication initiation complex once per cell cycle. Binds the DnaA box (a 9 base pair repeat at the origin) and separates the double-stranded (ds)DNA. Forms a right-handed helical filament on oriC DNA; dsDNA binds to the exterior of the filament while single-stranded (ss)DNA is stabiized in the filament's interior. The ATP-DnaA-oriC complex binds and stabilizes one strand of the AT-rich DNA unwinding element (DUE), permitting loading of DNA polymerase. After initiation quickly degrades to an ADP-DnaA complex that is not apt for DNA replication. Binds acidic phospholipids.</text>
</comment>
<comment type="subunit">
    <text evidence="1">Oligomerizes as a right-handed, spiral filament on DNA at oriC.</text>
</comment>
<comment type="subcellular location">
    <subcellularLocation>
        <location evidence="1">Cytoplasm</location>
    </subcellularLocation>
</comment>
<comment type="domain">
    <text evidence="1">Domain I is involved in oligomerization and binding regulators, domain II is flexibile and of varying length in different bacteria, domain III forms the AAA+ region, while domain IV binds dsDNA.</text>
</comment>
<comment type="similarity">
    <text evidence="1">Belongs to the DnaA family.</text>
</comment>
<protein>
    <recommendedName>
        <fullName evidence="1">Chromosomal replication initiator protein DnaA</fullName>
    </recommendedName>
</protein>
<proteinExistence type="inferred from homology"/>
<reference key="1">
    <citation type="journal article" date="2009" name="BMC Genomics">
        <title>Evidence for niche adaptation in the genome of the bovine pathogen Streptococcus uberis.</title>
        <authorList>
            <person name="Ward P.N."/>
            <person name="Holden M.T.G."/>
            <person name="Leigh J.A."/>
            <person name="Lennard N."/>
            <person name="Bignell A."/>
            <person name="Barron A."/>
            <person name="Clark L."/>
            <person name="Quail M.A."/>
            <person name="Woodward J."/>
            <person name="Barrell B.G."/>
            <person name="Egan S.A."/>
            <person name="Field T.R."/>
            <person name="Maskell D."/>
            <person name="Kehoe M."/>
            <person name="Dowson C.G."/>
            <person name="Chanter N."/>
            <person name="Whatmore A.M."/>
            <person name="Bentley S.D."/>
            <person name="Parkhill J."/>
        </authorList>
    </citation>
    <scope>NUCLEOTIDE SEQUENCE [LARGE SCALE GENOMIC DNA]</scope>
    <source>
        <strain>ATCC BAA-854 / 0140J</strain>
    </source>
</reference>
<evidence type="ECO:0000255" key="1">
    <source>
        <dbReference type="HAMAP-Rule" id="MF_00377"/>
    </source>
</evidence>
<name>DNAA_STRU0</name>
<sequence length="451" mass="51626">MTENETIFWNRILELAQSQLKQTTYEFFVLDARLVKVENQVATIYLDPMKELFWEQNLKDVILTAGFEVFNAHISVNYQFEDDLASEIEESTSNHIFSRQTINSLPAITSDLNPKYSFDNFIQGDENRWAVAASLAVANTPGTTYNPLFIWGGPGLGKTHLLNAIGNAVLLDNPKARVKYITAENFINEFVIHIRLDTMDELKEKFRNLDLLLIDDIQSLAKKTLLGTQEEFFNTFNALHNNNKQIVLTSDRTPDHLNDLEQRLVTRFKWGLTVNITPPDFETRVAILTNKIQEYNFTFPQDTIEYLAGQFDSNVRDLEGALKDISLVANFKEIDKITVDIAAEAIRARKQDTPKMTIIPIEEIQTQVGKFYGVTVKEIKATKRTQNIVLARQVAMFLAREMTDNSLPKIGKEFGGRDHSTVLHAYNKIKNMIIEDESLRIEIETIKNKIK</sequence>